<keyword id="KW-0997">Cell inner membrane</keyword>
<keyword id="KW-1003">Cell membrane</keyword>
<keyword id="KW-0472">Membrane</keyword>
<keyword id="KW-0520">NAD</keyword>
<keyword id="KW-0874">Quinone</keyword>
<keyword id="KW-1278">Translocase</keyword>
<keyword id="KW-0812">Transmembrane</keyword>
<keyword id="KW-1133">Transmembrane helix</keyword>
<keyword id="KW-0813">Transport</keyword>
<keyword id="KW-0830">Ubiquinone</keyword>
<comment type="function">
    <text evidence="1">NDH-1 shuttles electrons from NADH, via FMN and iron-sulfur (Fe-S) centers, to quinones in the respiratory chain. The immediate electron acceptor for the enzyme in this species is believed to be ubiquinone. Couples the redox reaction to proton translocation (for every two electrons transferred, four hydrogen ions are translocated across the cytoplasmic membrane), and thus conserves the redox energy in a proton gradient.</text>
</comment>
<comment type="catalytic activity">
    <reaction evidence="1">
        <text>a quinone + NADH + 5 H(+)(in) = a quinol + NAD(+) + 4 H(+)(out)</text>
        <dbReference type="Rhea" id="RHEA:57888"/>
        <dbReference type="ChEBI" id="CHEBI:15378"/>
        <dbReference type="ChEBI" id="CHEBI:24646"/>
        <dbReference type="ChEBI" id="CHEBI:57540"/>
        <dbReference type="ChEBI" id="CHEBI:57945"/>
        <dbReference type="ChEBI" id="CHEBI:132124"/>
    </reaction>
</comment>
<comment type="subunit">
    <text evidence="1">NDH-1 is composed of 14 different subunits. Subunits NuoA, H, J, K, L, M, N constitute the membrane sector of the complex.</text>
</comment>
<comment type="subcellular location">
    <subcellularLocation>
        <location evidence="1">Cell inner membrane</location>
        <topology evidence="1">Multi-pass membrane protein</topology>
    </subcellularLocation>
</comment>
<comment type="similarity">
    <text evidence="1">Belongs to the complex I subunit 4L family.</text>
</comment>
<organism>
    <name type="scientific">Coxiella burnetii (strain CbuG_Q212)</name>
    <name type="common">Coxiella burnetii (strain Q212)</name>
    <dbReference type="NCBI Taxonomy" id="434923"/>
    <lineage>
        <taxon>Bacteria</taxon>
        <taxon>Pseudomonadati</taxon>
        <taxon>Pseudomonadota</taxon>
        <taxon>Gammaproteobacteria</taxon>
        <taxon>Legionellales</taxon>
        <taxon>Coxiellaceae</taxon>
        <taxon>Coxiella</taxon>
    </lineage>
</organism>
<reference key="1">
    <citation type="journal article" date="2009" name="Infect. Immun.">
        <title>Comparative genomics reveal extensive transposon-mediated genomic plasticity and diversity among potential effector proteins within the genus Coxiella.</title>
        <authorList>
            <person name="Beare P.A."/>
            <person name="Unsworth N."/>
            <person name="Andoh M."/>
            <person name="Voth D.E."/>
            <person name="Omsland A."/>
            <person name="Gilk S.D."/>
            <person name="Williams K.P."/>
            <person name="Sobral B.W."/>
            <person name="Kupko J.J. III"/>
            <person name="Porcella S.F."/>
            <person name="Samuel J.E."/>
            <person name="Heinzen R.A."/>
        </authorList>
    </citation>
    <scope>NUCLEOTIDE SEQUENCE [LARGE SCALE GENOMIC DNA]</scope>
    <source>
        <strain>CbuG_Q212</strain>
    </source>
</reference>
<feature type="chain" id="PRO_0000390019" description="NADH-quinone oxidoreductase subunit K">
    <location>
        <begin position="1"/>
        <end position="101"/>
    </location>
</feature>
<feature type="transmembrane region" description="Helical" evidence="1">
    <location>
        <begin position="4"/>
        <end position="24"/>
    </location>
</feature>
<feature type="transmembrane region" description="Helical" evidence="1">
    <location>
        <begin position="30"/>
        <end position="50"/>
    </location>
</feature>
<feature type="transmembrane region" description="Helical" evidence="1">
    <location>
        <begin position="61"/>
        <end position="81"/>
    </location>
</feature>
<accession>B6IZ55</accession>
<protein>
    <recommendedName>
        <fullName evidence="1">NADH-quinone oxidoreductase subunit K</fullName>
        <ecNumber evidence="1">7.1.1.-</ecNumber>
    </recommendedName>
    <alternativeName>
        <fullName evidence="1">NADH dehydrogenase I subunit K</fullName>
    </alternativeName>
    <alternativeName>
        <fullName evidence="1">NDH-1 subunit K</fullName>
    </alternativeName>
</protein>
<sequence length="101" mass="11056">MIPLGYFLIIGAILFGLGFAGIIINRKNLIVLLMCIELMLLAVNTNFIAFSQYLGARAGEIFVFFILTVAAAESAIGLAILVLFYRRRGSINVDDMNILKG</sequence>
<evidence type="ECO:0000255" key="1">
    <source>
        <dbReference type="HAMAP-Rule" id="MF_01456"/>
    </source>
</evidence>
<proteinExistence type="inferred from homology"/>
<name>NUOK_COXB2</name>
<gene>
    <name evidence="1" type="primary">nuoK</name>
    <name type="ordered locus">CbuG_0570</name>
</gene>
<dbReference type="EC" id="7.1.1.-" evidence="1"/>
<dbReference type="EMBL" id="CP001019">
    <property type="protein sequence ID" value="ACJ17983.1"/>
    <property type="molecule type" value="Genomic_DNA"/>
</dbReference>
<dbReference type="RefSeq" id="WP_005769056.1">
    <property type="nucleotide sequence ID" value="NC_011527.1"/>
</dbReference>
<dbReference type="SMR" id="B6IZ55"/>
<dbReference type="KEGG" id="cbg:CbuG_0570"/>
<dbReference type="HOGENOM" id="CLU_144724_2_0_6"/>
<dbReference type="GO" id="GO:0030964">
    <property type="term" value="C:NADH dehydrogenase complex"/>
    <property type="evidence" value="ECO:0007669"/>
    <property type="project" value="TreeGrafter"/>
</dbReference>
<dbReference type="GO" id="GO:0005886">
    <property type="term" value="C:plasma membrane"/>
    <property type="evidence" value="ECO:0007669"/>
    <property type="project" value="UniProtKB-SubCell"/>
</dbReference>
<dbReference type="GO" id="GO:0050136">
    <property type="term" value="F:NADH:ubiquinone reductase (non-electrogenic) activity"/>
    <property type="evidence" value="ECO:0007669"/>
    <property type="project" value="UniProtKB-UniRule"/>
</dbReference>
<dbReference type="GO" id="GO:0048038">
    <property type="term" value="F:quinone binding"/>
    <property type="evidence" value="ECO:0007669"/>
    <property type="project" value="UniProtKB-KW"/>
</dbReference>
<dbReference type="GO" id="GO:0042773">
    <property type="term" value="P:ATP synthesis coupled electron transport"/>
    <property type="evidence" value="ECO:0007669"/>
    <property type="project" value="InterPro"/>
</dbReference>
<dbReference type="FunFam" id="1.10.287.3510:FF:000001">
    <property type="entry name" value="NADH-quinone oxidoreductase subunit K"/>
    <property type="match status" value="1"/>
</dbReference>
<dbReference type="Gene3D" id="1.10.287.3510">
    <property type="match status" value="1"/>
</dbReference>
<dbReference type="HAMAP" id="MF_01456">
    <property type="entry name" value="NDH1_NuoK"/>
    <property type="match status" value="1"/>
</dbReference>
<dbReference type="InterPro" id="IPR001133">
    <property type="entry name" value="NADH_UbQ_OxRdtase_chain4L/K"/>
</dbReference>
<dbReference type="InterPro" id="IPR039428">
    <property type="entry name" value="NUOK/Mnh_C1-like"/>
</dbReference>
<dbReference type="NCBIfam" id="NF004320">
    <property type="entry name" value="PRK05715.1-2"/>
    <property type="match status" value="1"/>
</dbReference>
<dbReference type="NCBIfam" id="NF004321">
    <property type="entry name" value="PRK05715.1-3"/>
    <property type="match status" value="1"/>
</dbReference>
<dbReference type="NCBIfam" id="NF004323">
    <property type="entry name" value="PRK05715.1-5"/>
    <property type="match status" value="1"/>
</dbReference>
<dbReference type="PANTHER" id="PTHR11434:SF21">
    <property type="entry name" value="NADH DEHYDROGENASE SUBUNIT 4L-RELATED"/>
    <property type="match status" value="1"/>
</dbReference>
<dbReference type="PANTHER" id="PTHR11434">
    <property type="entry name" value="NADH-UBIQUINONE OXIDOREDUCTASE SUBUNIT ND4L"/>
    <property type="match status" value="1"/>
</dbReference>
<dbReference type="Pfam" id="PF00420">
    <property type="entry name" value="Oxidored_q2"/>
    <property type="match status" value="1"/>
</dbReference>